<proteinExistence type="evidence at protein level"/>
<reference key="1">
    <citation type="journal article" date="2004" name="Proc. Natl. Acad. Sci. U.S.A.">
        <title>Complete genomes of two clinical Staphylococcus aureus strains: evidence for the rapid evolution of virulence and drug resistance.</title>
        <authorList>
            <person name="Holden M.T.G."/>
            <person name="Feil E.J."/>
            <person name="Lindsay J.A."/>
            <person name="Peacock S.J."/>
            <person name="Day N.P.J."/>
            <person name="Enright M.C."/>
            <person name="Foster T.J."/>
            <person name="Moore C.E."/>
            <person name="Hurst L."/>
            <person name="Atkin R."/>
            <person name="Barron A."/>
            <person name="Bason N."/>
            <person name="Bentley S.D."/>
            <person name="Chillingworth C."/>
            <person name="Chillingworth T."/>
            <person name="Churcher C."/>
            <person name="Clark L."/>
            <person name="Corton C."/>
            <person name="Cronin A."/>
            <person name="Doggett J."/>
            <person name="Dowd L."/>
            <person name="Feltwell T."/>
            <person name="Hance Z."/>
            <person name="Harris B."/>
            <person name="Hauser H."/>
            <person name="Holroyd S."/>
            <person name="Jagels K."/>
            <person name="James K.D."/>
            <person name="Lennard N."/>
            <person name="Line A."/>
            <person name="Mayes R."/>
            <person name="Moule S."/>
            <person name="Mungall K."/>
            <person name="Ormond D."/>
            <person name="Quail M.A."/>
            <person name="Rabbinowitsch E."/>
            <person name="Rutherford K.M."/>
            <person name="Sanders M."/>
            <person name="Sharp S."/>
            <person name="Simmonds M."/>
            <person name="Stevens K."/>
            <person name="Whitehead S."/>
            <person name="Barrell B.G."/>
            <person name="Spratt B.G."/>
            <person name="Parkhill J."/>
        </authorList>
    </citation>
    <scope>NUCLEOTIDE SEQUENCE [LARGE SCALE GENOMIC DNA]</scope>
    <source>
        <strain>MRSA252</strain>
    </source>
</reference>
<reference key="2">
    <citation type="journal article" date="2007" name="J. Immunol.">
        <title>Staphylococcal complement inhibitor: structure and active sites.</title>
        <authorList>
            <person name="Rooijakkers S.H.M."/>
            <person name="Milder F.J."/>
            <person name="Bardoel B.W."/>
            <person name="Ruyken M."/>
            <person name="van Strijp J.A.G."/>
            <person name="Gros P."/>
        </authorList>
    </citation>
    <scope>X-RAY CRYSTALLOGRAPHY (1.8 ANGSTROMS) OF 32-113</scope>
</reference>
<name>SCIN_STAAR</name>
<evidence type="ECO:0000250" key="1"/>
<evidence type="ECO:0000255" key="2"/>
<evidence type="ECO:0000305" key="3"/>
<evidence type="ECO:0007829" key="4">
    <source>
        <dbReference type="PDB" id="2QFF"/>
    </source>
</evidence>
<feature type="signal peptide" evidence="2">
    <location>
        <begin position="1"/>
        <end position="31"/>
    </location>
</feature>
<feature type="chain" id="PRO_0000319868" description="Staphylococcal complement inhibitor">
    <location>
        <begin position="32"/>
        <end position="116"/>
    </location>
</feature>
<feature type="region of interest" description="Essential for activity">
    <location>
        <begin position="62"/>
        <end position="79"/>
    </location>
</feature>
<feature type="helix" evidence="4">
    <location>
        <begin position="41"/>
        <end position="54"/>
    </location>
</feature>
<feature type="helix" evidence="4">
    <location>
        <begin position="57"/>
        <end position="63"/>
    </location>
</feature>
<feature type="helix" evidence="4">
    <location>
        <begin position="64"/>
        <end position="66"/>
    </location>
</feature>
<feature type="helix" evidence="4">
    <location>
        <begin position="69"/>
        <end position="88"/>
    </location>
</feature>
<feature type="helix" evidence="4">
    <location>
        <begin position="91"/>
        <end position="112"/>
    </location>
</feature>
<gene>
    <name type="primary">scn</name>
    <name type="ordered locus">SAR2035</name>
</gene>
<accession>Q6GFB4</accession>
<keyword id="KW-0002">3D-structure</keyword>
<keyword id="KW-0964">Secreted</keyword>
<keyword id="KW-0732">Signal</keyword>
<keyword id="KW-0843">Virulence</keyword>
<comment type="function">
    <text evidence="1">Involved in countering the first line of host defense mechanisms. Efficiently inhibits opsonization, phagocytosis and killing of S.aureus by human neutrophils. Acts by binding and stabilizing human C3 convertases (C4b2a and C3bBb), leading to their inactivation. The convertases are no longer able to cleave complement C3, therefore preventing further C3b deposition on the bacterial surface and phagocytosis of the bacterium. Also prevents C5a-induced neutrophil responses (By similarity).</text>
</comment>
<comment type="subcellular location">
    <subcellularLocation>
        <location evidence="1">Secreted</location>
    </subcellularLocation>
</comment>
<comment type="similarity">
    <text evidence="3">Belongs to the SCIN family.</text>
</comment>
<protein>
    <recommendedName>
        <fullName>Staphylococcal complement inhibitor</fullName>
        <shortName>SCIN</shortName>
    </recommendedName>
</protein>
<organism>
    <name type="scientific">Staphylococcus aureus (strain MRSA252)</name>
    <dbReference type="NCBI Taxonomy" id="282458"/>
    <lineage>
        <taxon>Bacteria</taxon>
        <taxon>Bacillati</taxon>
        <taxon>Bacillota</taxon>
        <taxon>Bacilli</taxon>
        <taxon>Bacillales</taxon>
        <taxon>Staphylococcaceae</taxon>
        <taxon>Staphylococcus</taxon>
    </lineage>
</organism>
<dbReference type="EMBL" id="BX571856">
    <property type="protein sequence ID" value="CAG41021.1"/>
    <property type="molecule type" value="Genomic_DNA"/>
</dbReference>
<dbReference type="RefSeq" id="WP_000702263.1">
    <property type="nucleotide sequence ID" value="NC_002952.2"/>
</dbReference>
<dbReference type="PDB" id="2QFF">
    <property type="method" value="X-ray"/>
    <property type="resolution" value="1.80 A"/>
    <property type="chains" value="A=32-113"/>
</dbReference>
<dbReference type="PDB" id="2WIN">
    <property type="method" value="X-ray"/>
    <property type="resolution" value="3.90 A"/>
    <property type="chains" value="M/N/P/Q=32-116"/>
</dbReference>
<dbReference type="PDB" id="6RUR">
    <property type="method" value="X-ray"/>
    <property type="resolution" value="6.00 A"/>
    <property type="chains" value="N/Q=32-116"/>
</dbReference>
<dbReference type="PDBsum" id="2QFF"/>
<dbReference type="PDBsum" id="2WIN"/>
<dbReference type="PDBsum" id="6RUR"/>
<dbReference type="SMR" id="Q6GFB4"/>
<dbReference type="KEGG" id="sar:SAR2035"/>
<dbReference type="HOGENOM" id="CLU_166895_0_0_9"/>
<dbReference type="EvolutionaryTrace" id="Q6GFB4"/>
<dbReference type="PRO" id="PR:Q6GFB4"/>
<dbReference type="Proteomes" id="UP000000596">
    <property type="component" value="Chromosome"/>
</dbReference>
<dbReference type="GO" id="GO:0005576">
    <property type="term" value="C:extracellular region"/>
    <property type="evidence" value="ECO:0007669"/>
    <property type="project" value="UniProtKB-SubCell"/>
</dbReference>
<dbReference type="Gene3D" id="1.20.1270.10">
    <property type="match status" value="1"/>
</dbReference>
<dbReference type="InterPro" id="IPR029048">
    <property type="entry name" value="HSP70_C_sf"/>
</dbReference>
<dbReference type="InterPro" id="IPR021612">
    <property type="entry name" value="SCIN"/>
</dbReference>
<dbReference type="Pfam" id="PF11546">
    <property type="entry name" value="CompInhib_SCIN"/>
    <property type="match status" value="1"/>
</dbReference>
<sequence>MKIRKSILAGTLAIVLASPLVTNLDKNEAQASTSLPTSNEYQNEKLANELKSLLDELNVNELATGSLNTYYKRTIKISGQKAMYALKSKDFKKMSEAKYQLQKIYNEIDEALKSKY</sequence>